<comment type="function">
    <text evidence="1 4 6">Involved in late steps of the endosomal multivesicular bodies (MVB) pathway. Recognizes membrane-associated ESCRT-III assemblies and catalyzes their disassembly, possibly in combination with membrane fission. Redistributes the ESCRT-III components to the cytoplasm for further rounds of MVB sorting. MVBs contain intraluminal vesicles (ILVs) that are generated by invagination and scission from the limiting membrane of the endosome and mostly are delivered to lysosomes enabling degradation of membrane proteins, such as stimulated growth factor receptors, lysosomal enzymes and lipids. VPS4A/B are required for the exosomal release of SDCBP, CD63 and syndecan (By similarity).</text>
</comment>
<comment type="function">
    <text evidence="1">(Microbial infection) In conjunction with the ESCRT machinery also appears to function in topologically equivalent membrane fission events, such as the terminal stages of cytokinesis and enveloped virus budding (lentiviruses).</text>
</comment>
<comment type="catalytic activity">
    <reaction>
        <text>ATP + H2O = ADP + phosphate + H(+)</text>
        <dbReference type="Rhea" id="RHEA:13065"/>
        <dbReference type="ChEBI" id="CHEBI:15377"/>
        <dbReference type="ChEBI" id="CHEBI:15378"/>
        <dbReference type="ChEBI" id="CHEBI:30616"/>
        <dbReference type="ChEBI" id="CHEBI:43474"/>
        <dbReference type="ChEBI" id="CHEBI:456216"/>
        <dbReference type="EC" id="3.6.4.6"/>
    </reaction>
</comment>
<comment type="subunit">
    <text evidence="1 7 8">Proposed to be monomeric or homodimeric in nucleotide-free form and to oligomerize upon binding to ATP to form two stacked hexameric or heptameric rings with a central pore through which ESCRT-III substrates are translocated in an ATP-dependent manner. In vitro, associates on the inside of a helical tubular structure formed by a CHMP2A-CHMP3 polymer. Interacts with CHMP1A, CHMP1B, CHMP4B and CHMP6. Interacts with CHMP2A (PubMed:15173323). Interacts with VPS4A; the interaction suggests a heteromeric assembly with VPS4A (PubMed:12594041). Interacts with VTA1 (By similarity).</text>
</comment>
<comment type="subcellular location">
    <subcellularLocation>
        <location evidence="7">Late endosome membrane</location>
        <topology evidence="11">Peripheral membrane protein</topology>
    </subcellularLocation>
    <text>Membrane-associated in the prevacuolar endosomal compartment.</text>
</comment>
<comment type="tissue specificity">
    <text evidence="7 10">High level expression seen in the kidney. It is also expressed in the heart, brain, spleen, lung, liver, skeletal muscle, and testis.</text>
</comment>
<comment type="domain">
    <text evidence="1">The MIT domain serves as an adapter for ESCRT-III proteins. It forms an asymmetric three-helix bundle that binds amphipathic MIM (MIT interacting motif) helices along the groove between MIT helices 2 and 3 present in a subset of ESCRT-III proteins thus establishing the canonical MIM-MIT interaction. In an extended conformation along the groove between helices 1 and 3, also binds to a type-2 MIT interacting motif (MIM2).</text>
</comment>
<comment type="similarity">
    <text evidence="11">Belongs to the AAA ATPase family.</text>
</comment>
<keyword id="KW-0002">3D-structure</keyword>
<keyword id="KW-0067">ATP-binding</keyword>
<keyword id="KW-0131">Cell cycle</keyword>
<keyword id="KW-0132">Cell division</keyword>
<keyword id="KW-0175">Coiled coil</keyword>
<keyword id="KW-0967">Endosome</keyword>
<keyword id="KW-0378">Hydrolase</keyword>
<keyword id="KW-0472">Membrane</keyword>
<keyword id="KW-0547">Nucleotide-binding</keyword>
<keyword id="KW-0597">Phosphoprotein</keyword>
<keyword id="KW-0653">Protein transport</keyword>
<keyword id="KW-1185">Reference proteome</keyword>
<keyword id="KW-0813">Transport</keyword>
<sequence>MASTNTNLQKAIDLASKAAQEDKAGNYEEALQLYQHAVQYFLHVVKYEAQGDKAKQSIRAKCTEYLDRAEKLKEYLKKKEKKPQKPVKEEQSGPVDEKGNDSDGEAESDDPEKKKLQNQLQGAIVIERPNVKWSDVAGLEGAKEALKEAVILPIKFPHLFTGKRTPWRGILLFGPPGTGKSYLAKAVATEANNSTFFSISSSDLVSKWLGESEKLVKNLFQLARENKPSIIFIDEIDSLCGSRSENESEAARRIKTEFLVQMQGVGVDNDGILVLGATNIPWVLDSAIRRRFEKRIYIPLPEAHARAAMFRLHLGSTQNSLTEADFQELGRKTDGYSGADISIIVRDALMQPVRKVQSATHFKKVRGPSRADPNCIVNDLLTPCSPGDPGAIEMTWMDVPGDKLLEPVVSMWDMLRSLSSTKPTVNEQDLLKLKKFTEDFGQEG</sequence>
<gene>
    <name evidence="12" type="primary">Vps4b</name>
    <name type="synonym">Skd1</name>
</gene>
<accession>P46467</accession>
<accession>Q91W22</accession>
<accession>Q9R1C9</accession>
<protein>
    <recommendedName>
        <fullName evidence="11">Vacuolar protein sorting-associated protein 4B</fullName>
        <ecNumber>3.6.4.6</ecNumber>
    </recommendedName>
    <alternativeName>
        <fullName>Suppressor of K(+) transport growth defect 1</fullName>
        <shortName>Protein SKD1</shortName>
    </alternativeName>
</protein>
<evidence type="ECO:0000250" key="1">
    <source>
        <dbReference type="UniProtKB" id="O75351"/>
    </source>
</evidence>
<evidence type="ECO:0000255" key="2"/>
<evidence type="ECO:0000256" key="3">
    <source>
        <dbReference type="SAM" id="MobiDB-lite"/>
    </source>
</evidence>
<evidence type="ECO:0000269" key="4">
    <source>
    </source>
</evidence>
<evidence type="ECO:0000269" key="5">
    <source>
    </source>
</evidence>
<evidence type="ECO:0000269" key="6">
    <source>
    </source>
</evidence>
<evidence type="ECO:0000269" key="7">
    <source>
    </source>
</evidence>
<evidence type="ECO:0000269" key="8">
    <source>
    </source>
</evidence>
<evidence type="ECO:0000269" key="9">
    <source>
    </source>
</evidence>
<evidence type="ECO:0000269" key="10">
    <source>
    </source>
</evidence>
<evidence type="ECO:0000305" key="11"/>
<evidence type="ECO:0000312" key="12">
    <source>
        <dbReference type="MGI" id="MGI:1100499"/>
    </source>
</evidence>
<evidence type="ECO:0007744" key="13">
    <source>
    </source>
</evidence>
<evidence type="ECO:0007744" key="14">
    <source>
    </source>
</evidence>
<evidence type="ECO:0007829" key="15">
    <source>
        <dbReference type="PDB" id="2ZAM"/>
    </source>
</evidence>
<evidence type="ECO:0007829" key="16">
    <source>
        <dbReference type="PDB" id="2ZAN"/>
    </source>
</evidence>
<evidence type="ECO:0007829" key="17">
    <source>
        <dbReference type="PDB" id="2ZAO"/>
    </source>
</evidence>
<reference key="1">
    <citation type="journal article" date="1994" name="FEBS Lett.">
        <title>Identification of a novel mammalian member of the NSF/CDC48p/Pas1p/TBP-1 family through heterologous expression in yeast.</title>
        <authorList>
            <person name="Perier F."/>
            <person name="Coulter K.L."/>
            <person name="Liang H."/>
            <person name="Radeke C.M."/>
            <person name="Gaber R.F."/>
            <person name="Vandenberg C.A."/>
        </authorList>
    </citation>
    <scope>NUCLEOTIDE SEQUENCE [MRNA]</scope>
    <scope>TISSUE SPECIFICITY</scope>
    <source>
        <strain>BALB/cJ</strain>
    </source>
</reference>
<reference key="2">
    <citation type="journal article" date="1999" name="Gene">
        <title>Cloning, characterisation, and functional expression of the Mus musculus SKD1 gene in yeast demonstrates that the mouse SKD1 and the yeast VPS4 genes are orthologues and involved in intracellular protein trafficking.</title>
        <authorList>
            <person name="Scheuring S."/>
            <person name="Bodor O."/>
            <person name="Rohricht R.A."/>
            <person name="Muller S."/>
            <person name="Beyer A."/>
            <person name="Kohrer K."/>
        </authorList>
    </citation>
    <scope>NUCLEOTIDE SEQUENCE [GENOMIC DNA]</scope>
    <scope>FUNCTION</scope>
</reference>
<reference key="3">
    <citation type="journal article" date="2004" name="Genome Res.">
        <title>The status, quality, and expansion of the NIH full-length cDNA project: the Mammalian Gene Collection (MGC).</title>
        <authorList>
            <consortium name="The MGC Project Team"/>
        </authorList>
    </citation>
    <scope>NUCLEOTIDE SEQUENCE [LARGE SCALE MRNA]</scope>
    <source>
        <tissue>Mammary tumor</tissue>
    </source>
</reference>
<reference key="4">
    <citation type="journal article" date="2003" name="Gene">
        <title>Comparative sequence and expression analyses of four mammalian VPS4 genes.</title>
        <authorList>
            <person name="Beyer A."/>
            <person name="Scheuring S."/>
            <person name="Mueller S."/>
            <person name="Mincheva A."/>
            <person name="Lichter P."/>
            <person name="Koehrer K."/>
        </authorList>
    </citation>
    <scope>PARTIAL NUCLEOTIDE SEQUENCE [GENOMIC DNA]</scope>
    <scope>SUBCELLULAR LOCATION</scope>
    <scope>TISSUE SPECIFICITY</scope>
    <scope>INTERACTION WITH VPS4A</scope>
    <scope>MUTAGENESIS OF GLU-235</scope>
</reference>
<reference key="5">
    <citation type="journal article" date="2000" name="Mol. Biol. Cell">
        <title>ATPase-defective mammalian VPS4 localizes to aberrant endosomes and impairs cholesterol trafficking.</title>
        <authorList>
            <person name="Bishop N."/>
            <person name="Woodman P."/>
        </authorList>
    </citation>
    <scope>SUBCELLULAR LOCATION</scope>
    <scope>MUTAGENESIS OF LYS-180 AND GLU-235</scope>
</reference>
<reference key="6">
    <citation type="journal article" date="2000" name="Mol. Biol. Cell">
        <title>The mouse SKD1, a homologue of yeast Vps4p, is required for normal endosomal trafficking and morphology in mammalian cells.</title>
        <authorList>
            <person name="Yoshimori T."/>
            <person name="Yamagata F."/>
            <person name="Yamamoto A."/>
            <person name="Mizushima N."/>
            <person name="Kabeya Y."/>
            <person name="Nara A."/>
            <person name="Miwako I."/>
            <person name="Ohashi M."/>
            <person name="Ohsumi M."/>
            <person name="Ohsumi Y."/>
        </authorList>
    </citation>
    <scope>FUNCTION</scope>
    <scope>MUTAGENESIS OF GLU-235</scope>
</reference>
<reference key="7">
    <citation type="journal article" date="2004" name="J. Cell Sci.">
        <title>Mammalian class E Vps proteins, SBP1 and mVps2/CHMP2A, interact with and regulate the function of an AAA-ATPase SKD1/Vps4B.</title>
        <authorList>
            <person name="Fujita H."/>
            <person name="Umezuki Y."/>
            <person name="Imamura K."/>
            <person name="Ishikawa D."/>
            <person name="Uchimura S."/>
            <person name="Nara A."/>
            <person name="Yoshimori T."/>
            <person name="Hayashizaki Y."/>
            <person name="Kawai J."/>
            <person name="Ishidoh K."/>
            <person name="Tanaka Y."/>
            <person name="Himeno M."/>
        </authorList>
    </citation>
    <scope>INTERACTION WITH CHMP2A</scope>
</reference>
<reference key="8">
    <citation type="journal article" date="2009" name="Immunity">
        <title>The phagosomal proteome in interferon-gamma-activated macrophages.</title>
        <authorList>
            <person name="Trost M."/>
            <person name="English L."/>
            <person name="Lemieux S."/>
            <person name="Courcelles M."/>
            <person name="Desjardins M."/>
            <person name="Thibault P."/>
        </authorList>
    </citation>
    <scope>PHOSPHORYLATION [LARGE SCALE ANALYSIS] AT SER-102</scope>
    <scope>IDENTIFICATION BY MASS SPECTROMETRY [LARGE SCALE ANALYSIS]</scope>
</reference>
<reference key="9">
    <citation type="journal article" date="2010" name="Cell">
        <title>A tissue-specific atlas of mouse protein phosphorylation and expression.</title>
        <authorList>
            <person name="Huttlin E.L."/>
            <person name="Jedrychowski M.P."/>
            <person name="Elias J.E."/>
            <person name="Goswami T."/>
            <person name="Rad R."/>
            <person name="Beausoleil S.A."/>
            <person name="Villen J."/>
            <person name="Haas W."/>
            <person name="Sowa M.E."/>
            <person name="Gygi S.P."/>
        </authorList>
    </citation>
    <scope>PHOSPHORYLATION [LARGE SCALE ANALYSIS] AT SER-102</scope>
    <scope>IDENTIFICATION BY MASS SPECTROMETRY [LARGE SCALE ANALYSIS]</scope>
    <source>
        <tissue>Brain</tissue>
        <tissue>Brown adipose tissue</tissue>
        <tissue>Heart</tissue>
        <tissue>Kidney</tissue>
        <tissue>Lung</tissue>
        <tissue>Pancreas</tissue>
        <tissue>Spleen</tissue>
        <tissue>Testis</tissue>
    </source>
</reference>
<reference key="10">
    <citation type="journal article" date="2008" name="Traffic">
        <title>Nucleotide-dependent conformational changes and assembly of the AAA ATPase SKD1/VPS4B.</title>
        <authorList>
            <person name="Inoue M."/>
            <person name="Kamikubo H."/>
            <person name="Kataoka M."/>
            <person name="Kato R."/>
            <person name="Yoshimori T."/>
            <person name="Wakatsuki S."/>
            <person name="Kawasaki M."/>
        </authorList>
    </citation>
    <scope>X-RAY CRYSTALLOGRAPHY (3.0 ANGSTROMS) OF 123-444</scope>
    <scope>SUBUNIT</scope>
    <scope>MUTAGENESIS OF GLU-235 AND 290-ARG-ARG-291</scope>
</reference>
<feature type="chain" id="PRO_0000084768" description="Vacuolar protein sorting-associated protein 4B">
    <location>
        <begin position="1"/>
        <end position="444"/>
    </location>
</feature>
<feature type="domain" description="MIT">
    <location>
        <begin position="4"/>
        <end position="82"/>
    </location>
</feature>
<feature type="region of interest" description="Disordered" evidence="3">
    <location>
        <begin position="77"/>
        <end position="118"/>
    </location>
</feature>
<feature type="coiled-coil region" evidence="2">
    <location>
        <begin position="19"/>
        <end position="82"/>
    </location>
</feature>
<feature type="compositionally biased region" description="Basic and acidic residues" evidence="3">
    <location>
        <begin position="86"/>
        <end position="101"/>
    </location>
</feature>
<feature type="binding site" evidence="2">
    <location>
        <begin position="174"/>
        <end position="181"/>
    </location>
    <ligand>
        <name>ATP</name>
        <dbReference type="ChEBI" id="CHEBI:30616"/>
    </ligand>
</feature>
<feature type="modified residue" description="Phosphoserine" evidence="13 14">
    <location>
        <position position="102"/>
    </location>
</feature>
<feature type="modified residue" description="Phosphoserine" evidence="1">
    <location>
        <position position="108"/>
    </location>
</feature>
<feature type="modified residue" description="Phosphoserine" evidence="1">
    <location>
        <position position="410"/>
    </location>
</feature>
<feature type="mutagenesis site" description="Defective in ATP-binding. Causes membrane association. Induces vacuolation of endosomal compartments and impairs cholesterol sorting." evidence="5">
    <original>K</original>
    <variation>Q</variation>
    <location>
        <position position="180"/>
    </location>
</feature>
<feature type="mutagenesis site" description="Defective in ATP-hydrolysis. Causes membrane-association. Induces vacuolation of endosomal compartments and impairs cholesterol and protein sorting. Increased perinuclear localization." evidence="5 6 7 9">
    <original>E</original>
    <variation>Q</variation>
    <location>
        <position position="235"/>
    </location>
</feature>
<feature type="mutagenesis site" description="Abolishes ATP-dependent oligomerization." evidence="9">
    <original>RR</original>
    <variation>AA</variation>
    <location>
        <begin position="290"/>
        <end position="291"/>
    </location>
</feature>
<feature type="sequence conflict" description="In Ref. 1; AAA50497." evidence="11" ref="1">
    <original>E</original>
    <variation>A</variation>
    <location>
        <position position="90"/>
    </location>
</feature>
<feature type="sequence conflict" description="In Ref. 1; AAA50497." evidence="11" ref="1">
    <original>A</original>
    <variation>V</variation>
    <location>
        <position position="339"/>
    </location>
</feature>
<feature type="helix" evidence="16">
    <location>
        <begin position="133"/>
        <end position="135"/>
    </location>
</feature>
<feature type="helix" evidence="16">
    <location>
        <begin position="140"/>
        <end position="150"/>
    </location>
</feature>
<feature type="helix" evidence="16">
    <location>
        <begin position="152"/>
        <end position="155"/>
    </location>
</feature>
<feature type="turn" evidence="16">
    <location>
        <begin position="157"/>
        <end position="160"/>
    </location>
</feature>
<feature type="helix" evidence="16">
    <location>
        <begin position="162"/>
        <end position="164"/>
    </location>
</feature>
<feature type="strand" evidence="16">
    <location>
        <begin position="168"/>
        <end position="173"/>
    </location>
</feature>
<feature type="helix" evidence="16">
    <location>
        <begin position="180"/>
        <end position="190"/>
    </location>
</feature>
<feature type="strand" evidence="16">
    <location>
        <begin position="193"/>
        <end position="199"/>
    </location>
</feature>
<feature type="turn" evidence="15">
    <location>
        <begin position="203"/>
        <end position="205"/>
    </location>
</feature>
<feature type="helix" evidence="16">
    <location>
        <begin position="216"/>
        <end position="225"/>
    </location>
</feature>
<feature type="strand" evidence="16">
    <location>
        <begin position="228"/>
        <end position="234"/>
    </location>
</feature>
<feature type="turn" evidence="16">
    <location>
        <begin position="236"/>
        <end position="239"/>
    </location>
</feature>
<feature type="helix" evidence="16">
    <location>
        <begin position="249"/>
        <end position="251"/>
    </location>
</feature>
<feature type="helix" evidence="16">
    <location>
        <begin position="252"/>
        <end position="259"/>
    </location>
</feature>
<feature type="turn" evidence="16">
    <location>
        <begin position="260"/>
        <end position="263"/>
    </location>
</feature>
<feature type="strand" evidence="15">
    <location>
        <begin position="265"/>
        <end position="267"/>
    </location>
</feature>
<feature type="strand" evidence="16">
    <location>
        <begin position="273"/>
        <end position="279"/>
    </location>
</feature>
<feature type="helix" evidence="16">
    <location>
        <begin position="281"/>
        <end position="283"/>
    </location>
</feature>
<feature type="helix" evidence="16">
    <location>
        <begin position="286"/>
        <end position="289"/>
    </location>
</feature>
<feature type="strand" evidence="16">
    <location>
        <begin position="294"/>
        <end position="297"/>
    </location>
</feature>
<feature type="helix" evidence="16">
    <location>
        <begin position="303"/>
        <end position="314"/>
    </location>
</feature>
<feature type="strand" evidence="17">
    <location>
        <begin position="317"/>
        <end position="319"/>
    </location>
</feature>
<feature type="helix" evidence="16">
    <location>
        <begin position="323"/>
        <end position="332"/>
    </location>
</feature>
<feature type="turn" evidence="16">
    <location>
        <begin position="333"/>
        <end position="335"/>
    </location>
</feature>
<feature type="helix" evidence="16">
    <location>
        <begin position="338"/>
        <end position="349"/>
    </location>
</feature>
<feature type="helix" evidence="16">
    <location>
        <begin position="351"/>
        <end position="358"/>
    </location>
</feature>
<feature type="strand" evidence="16">
    <location>
        <begin position="360"/>
        <end position="365"/>
    </location>
</feature>
<feature type="strand" evidence="17">
    <location>
        <begin position="373"/>
        <end position="376"/>
    </location>
</feature>
<feature type="strand" evidence="16">
    <location>
        <begin position="380"/>
        <end position="384"/>
    </location>
</feature>
<feature type="strand" evidence="17">
    <location>
        <begin position="386"/>
        <end position="388"/>
    </location>
</feature>
<feature type="strand" evidence="16">
    <location>
        <begin position="391"/>
        <end position="393"/>
    </location>
</feature>
<feature type="turn" evidence="16">
    <location>
        <begin position="396"/>
        <end position="398"/>
    </location>
</feature>
<feature type="helix" evidence="17">
    <location>
        <begin position="401"/>
        <end position="403"/>
    </location>
</feature>
<feature type="helix" evidence="16">
    <location>
        <begin position="411"/>
        <end position="419"/>
    </location>
</feature>
<feature type="helix" evidence="16">
    <location>
        <begin position="427"/>
        <end position="436"/>
    </location>
</feature>
<feature type="turn" evidence="16">
    <location>
        <begin position="441"/>
        <end position="443"/>
    </location>
</feature>
<proteinExistence type="evidence at protein level"/>
<organism>
    <name type="scientific">Mus musculus</name>
    <name type="common">Mouse</name>
    <dbReference type="NCBI Taxonomy" id="10090"/>
    <lineage>
        <taxon>Eukaryota</taxon>
        <taxon>Metazoa</taxon>
        <taxon>Chordata</taxon>
        <taxon>Craniata</taxon>
        <taxon>Vertebrata</taxon>
        <taxon>Euteleostomi</taxon>
        <taxon>Mammalia</taxon>
        <taxon>Eutheria</taxon>
        <taxon>Euarchontoglires</taxon>
        <taxon>Glires</taxon>
        <taxon>Rodentia</taxon>
        <taxon>Myomorpha</taxon>
        <taxon>Muroidea</taxon>
        <taxon>Muridae</taxon>
        <taxon>Murinae</taxon>
        <taxon>Mus</taxon>
        <taxon>Mus</taxon>
    </lineage>
</organism>
<dbReference type="EC" id="3.6.4.6"/>
<dbReference type="EMBL" id="U10119">
    <property type="protein sequence ID" value="AAA50497.1"/>
    <property type="molecule type" value="mRNA"/>
</dbReference>
<dbReference type="EMBL" id="AF134119">
    <property type="protein sequence ID" value="AAD47570.1"/>
    <property type="molecule type" value="Genomic_DNA"/>
</dbReference>
<dbReference type="EMBL" id="BC003799">
    <property type="protein sequence ID" value="AAH03799.1"/>
    <property type="molecule type" value="mRNA"/>
</dbReference>
<dbReference type="CCDS" id="CCDS15211.1"/>
<dbReference type="PIR" id="S48696">
    <property type="entry name" value="S48696"/>
</dbReference>
<dbReference type="RefSeq" id="NP_033216.2">
    <property type="nucleotide sequence ID" value="NM_009190.2"/>
</dbReference>
<dbReference type="PDB" id="2ZAM">
    <property type="method" value="X-ray"/>
    <property type="resolution" value="3.50 A"/>
    <property type="chains" value="A=1-444"/>
</dbReference>
<dbReference type="PDB" id="2ZAN">
    <property type="method" value="X-ray"/>
    <property type="resolution" value="3.00 A"/>
    <property type="chains" value="A=1-444"/>
</dbReference>
<dbReference type="PDB" id="2ZAO">
    <property type="method" value="X-ray"/>
    <property type="resolution" value="3.20 A"/>
    <property type="chains" value="A=1-444"/>
</dbReference>
<dbReference type="PDBsum" id="2ZAM"/>
<dbReference type="PDBsum" id="2ZAN"/>
<dbReference type="PDBsum" id="2ZAO"/>
<dbReference type="SMR" id="P46467"/>
<dbReference type="BioGRID" id="203266">
    <property type="interactions" value="66"/>
</dbReference>
<dbReference type="ComplexPortal" id="CPX-340">
    <property type="entry name" value="VPS4A/B complex"/>
</dbReference>
<dbReference type="FunCoup" id="P46467">
    <property type="interactions" value="3716"/>
</dbReference>
<dbReference type="IntAct" id="P46467">
    <property type="interactions" value="59"/>
</dbReference>
<dbReference type="MINT" id="P46467"/>
<dbReference type="STRING" id="10090.ENSMUSP00000092230"/>
<dbReference type="GlyGen" id="P46467">
    <property type="glycosylation" value="1 site, 1 O-linked glycan (1 site)"/>
</dbReference>
<dbReference type="iPTMnet" id="P46467"/>
<dbReference type="PhosphoSitePlus" id="P46467"/>
<dbReference type="jPOST" id="P46467"/>
<dbReference type="PaxDb" id="10090-ENSMUSP00000092230"/>
<dbReference type="PeptideAtlas" id="P46467"/>
<dbReference type="ProteomicsDB" id="275184"/>
<dbReference type="Pumba" id="P46467"/>
<dbReference type="Antibodypedia" id="23094">
    <property type="antibodies" value="186 antibodies from 31 providers"/>
</dbReference>
<dbReference type="DNASU" id="20479"/>
<dbReference type="Ensembl" id="ENSMUST00000094646.6">
    <property type="protein sequence ID" value="ENSMUSP00000092230.6"/>
    <property type="gene ID" value="ENSMUSG00000009907.18"/>
</dbReference>
<dbReference type="Ensembl" id="ENSMUST00000112736.8">
    <property type="protein sequence ID" value="ENSMUSP00000108356.2"/>
    <property type="gene ID" value="ENSMUSG00000009907.18"/>
</dbReference>
<dbReference type="GeneID" id="20479"/>
<dbReference type="KEGG" id="mmu:20479"/>
<dbReference type="UCSC" id="uc007cgz.2">
    <property type="organism name" value="mouse"/>
</dbReference>
<dbReference type="AGR" id="MGI:1100499"/>
<dbReference type="CTD" id="9525"/>
<dbReference type="MGI" id="MGI:1100499">
    <property type="gene designation" value="Vps4b"/>
</dbReference>
<dbReference type="VEuPathDB" id="HostDB:ENSMUSG00000009907"/>
<dbReference type="eggNOG" id="KOG0739">
    <property type="taxonomic scope" value="Eukaryota"/>
</dbReference>
<dbReference type="GeneTree" id="ENSGT00940000154973"/>
<dbReference type="HOGENOM" id="CLU_000688_21_2_1"/>
<dbReference type="InParanoid" id="P46467"/>
<dbReference type="OMA" id="IRRHEEW"/>
<dbReference type="OrthoDB" id="29072at2759"/>
<dbReference type="PhylomeDB" id="P46467"/>
<dbReference type="TreeFam" id="TF105012"/>
<dbReference type="BRENDA" id="3.6.4.6">
    <property type="organism ID" value="3474"/>
</dbReference>
<dbReference type="Reactome" id="R-MMU-917729">
    <property type="pathway name" value="Endosomal Sorting Complex Required For Transport (ESCRT)"/>
</dbReference>
<dbReference type="BioGRID-ORCS" id="20479">
    <property type="hits" value="29 hits in 77 CRISPR screens"/>
</dbReference>
<dbReference type="ChiTaRS" id="Vps4b">
    <property type="organism name" value="mouse"/>
</dbReference>
<dbReference type="EvolutionaryTrace" id="P46467"/>
<dbReference type="PRO" id="PR:P46467"/>
<dbReference type="Proteomes" id="UP000000589">
    <property type="component" value="Chromosome 1"/>
</dbReference>
<dbReference type="RNAct" id="P46467">
    <property type="molecule type" value="protein"/>
</dbReference>
<dbReference type="Bgee" id="ENSMUSG00000009907">
    <property type="expression patterns" value="Expressed in conjunctival fornix and 261 other cell types or tissues"/>
</dbReference>
<dbReference type="ExpressionAtlas" id="P46467">
    <property type="expression patterns" value="baseline and differential"/>
</dbReference>
<dbReference type="GO" id="GO:1904949">
    <property type="term" value="C:ATPase complex"/>
    <property type="evidence" value="ECO:0000303"/>
    <property type="project" value="ComplexPortal"/>
</dbReference>
<dbReference type="GO" id="GO:0005813">
    <property type="term" value="C:centrosome"/>
    <property type="evidence" value="ECO:0007669"/>
    <property type="project" value="Ensembl"/>
</dbReference>
<dbReference type="GO" id="GO:0005829">
    <property type="term" value="C:cytosol"/>
    <property type="evidence" value="ECO:0000314"/>
    <property type="project" value="MGI"/>
</dbReference>
<dbReference type="GO" id="GO:0005768">
    <property type="term" value="C:endosome"/>
    <property type="evidence" value="ECO:0000266"/>
    <property type="project" value="MGI"/>
</dbReference>
<dbReference type="GO" id="GO:0090543">
    <property type="term" value="C:Flemming body"/>
    <property type="evidence" value="ECO:0007669"/>
    <property type="project" value="Ensembl"/>
</dbReference>
<dbReference type="GO" id="GO:0031902">
    <property type="term" value="C:late endosome membrane"/>
    <property type="evidence" value="ECO:0007669"/>
    <property type="project" value="UniProtKB-SubCell"/>
</dbReference>
<dbReference type="GO" id="GO:0030496">
    <property type="term" value="C:midbody"/>
    <property type="evidence" value="ECO:0000303"/>
    <property type="project" value="ComplexPortal"/>
</dbReference>
<dbReference type="GO" id="GO:0005643">
    <property type="term" value="C:nuclear pore"/>
    <property type="evidence" value="ECO:0000303"/>
    <property type="project" value="ComplexPortal"/>
</dbReference>
<dbReference type="GO" id="GO:0005886">
    <property type="term" value="C:plasma membrane"/>
    <property type="evidence" value="ECO:0000303"/>
    <property type="project" value="ComplexPortal"/>
</dbReference>
<dbReference type="GO" id="GO:0000922">
    <property type="term" value="C:spindle pole"/>
    <property type="evidence" value="ECO:0007669"/>
    <property type="project" value="Ensembl"/>
</dbReference>
<dbReference type="GO" id="GO:0005524">
    <property type="term" value="F:ATP binding"/>
    <property type="evidence" value="ECO:0007669"/>
    <property type="project" value="UniProtKB-KW"/>
</dbReference>
<dbReference type="GO" id="GO:0016887">
    <property type="term" value="F:ATP hydrolysis activity"/>
    <property type="evidence" value="ECO:0000266"/>
    <property type="project" value="MGI"/>
</dbReference>
<dbReference type="GO" id="GO:0042803">
    <property type="term" value="F:protein homodimerization activity"/>
    <property type="evidence" value="ECO:0007669"/>
    <property type="project" value="Ensembl"/>
</dbReference>
<dbReference type="GO" id="GO:0044877">
    <property type="term" value="F:protein-containing complex binding"/>
    <property type="evidence" value="ECO:0007669"/>
    <property type="project" value="Ensembl"/>
</dbReference>
<dbReference type="GO" id="GO:0001525">
    <property type="term" value="P:angiogenesis"/>
    <property type="evidence" value="ECO:0000315"/>
    <property type="project" value="MGI"/>
</dbReference>
<dbReference type="GO" id="GO:0097352">
    <property type="term" value="P:autophagosome maturation"/>
    <property type="evidence" value="ECO:0000303"/>
    <property type="project" value="ComplexPortal"/>
</dbReference>
<dbReference type="GO" id="GO:0006914">
    <property type="term" value="P:autophagy"/>
    <property type="evidence" value="ECO:0000303"/>
    <property type="project" value="ComplexPortal"/>
</dbReference>
<dbReference type="GO" id="GO:0060070">
    <property type="term" value="P:canonical Wnt signaling pathway"/>
    <property type="evidence" value="ECO:0000315"/>
    <property type="project" value="MGI"/>
</dbReference>
<dbReference type="GO" id="GO:0007417">
    <property type="term" value="P:central nervous system development"/>
    <property type="evidence" value="ECO:0000315"/>
    <property type="project" value="MGI"/>
</dbReference>
<dbReference type="GO" id="GO:0030301">
    <property type="term" value="P:cholesterol transport"/>
    <property type="evidence" value="ECO:0000315"/>
    <property type="project" value="MGI"/>
</dbReference>
<dbReference type="GO" id="GO:0016197">
    <property type="term" value="P:endosomal transport"/>
    <property type="evidence" value="ECO:0000266"/>
    <property type="project" value="MGI"/>
</dbReference>
<dbReference type="GO" id="GO:0007032">
    <property type="term" value="P:endosome organization"/>
    <property type="evidence" value="ECO:0000315"/>
    <property type="project" value="MGI"/>
</dbReference>
<dbReference type="GO" id="GO:1904903">
    <property type="term" value="P:ESCRT III complex disassembly"/>
    <property type="evidence" value="ECO:0007669"/>
    <property type="project" value="Ensembl"/>
</dbReference>
<dbReference type="GO" id="GO:0060856">
    <property type="term" value="P:establishment of blood-brain barrier"/>
    <property type="evidence" value="ECO:0000315"/>
    <property type="project" value="MGI"/>
</dbReference>
<dbReference type="GO" id="GO:0061738">
    <property type="term" value="P:late endosomal microautophagy"/>
    <property type="evidence" value="ECO:0000315"/>
    <property type="project" value="ParkinsonsUK-UCL"/>
</dbReference>
<dbReference type="GO" id="GO:0061764">
    <property type="term" value="P:late endosome to lysosome transport via multivesicular body sorting pathway"/>
    <property type="evidence" value="ECO:0000303"/>
    <property type="project" value="ComplexPortal"/>
</dbReference>
<dbReference type="GO" id="GO:0090148">
    <property type="term" value="P:membrane fission"/>
    <property type="evidence" value="ECO:0000303"/>
    <property type="project" value="ComplexPortal"/>
</dbReference>
<dbReference type="GO" id="GO:0061952">
    <property type="term" value="P:midbody abscission"/>
    <property type="evidence" value="ECO:0000303"/>
    <property type="project" value="ComplexPortal"/>
</dbReference>
<dbReference type="GO" id="GO:0007080">
    <property type="term" value="P:mitotic metaphase chromosome alignment"/>
    <property type="evidence" value="ECO:0007669"/>
    <property type="project" value="Ensembl"/>
</dbReference>
<dbReference type="GO" id="GO:0036258">
    <property type="term" value="P:multivesicular body assembly"/>
    <property type="evidence" value="ECO:0000315"/>
    <property type="project" value="ParkinsonsUK-UCL"/>
</dbReference>
<dbReference type="GO" id="GO:0071985">
    <property type="term" value="P:multivesicular body sorting pathway"/>
    <property type="evidence" value="ECO:0000303"/>
    <property type="project" value="ComplexPortal"/>
</dbReference>
<dbReference type="GO" id="GO:1903542">
    <property type="term" value="P:negative regulation of exosomal secretion"/>
    <property type="evidence" value="ECO:0007669"/>
    <property type="project" value="Ensembl"/>
</dbReference>
<dbReference type="GO" id="GO:0031468">
    <property type="term" value="P:nuclear membrane reassembly"/>
    <property type="evidence" value="ECO:0000303"/>
    <property type="project" value="ComplexPortal"/>
</dbReference>
<dbReference type="GO" id="GO:0006997">
    <property type="term" value="P:nucleus organization"/>
    <property type="evidence" value="ECO:0000303"/>
    <property type="project" value="ComplexPortal"/>
</dbReference>
<dbReference type="GO" id="GO:0001778">
    <property type="term" value="P:plasma membrane repair"/>
    <property type="evidence" value="ECO:0000303"/>
    <property type="project" value="ComplexPortal"/>
</dbReference>
<dbReference type="GO" id="GO:1903724">
    <property type="term" value="P:positive regulation of centriole elongation"/>
    <property type="evidence" value="ECO:0007669"/>
    <property type="project" value="Ensembl"/>
</dbReference>
<dbReference type="GO" id="GO:1903543">
    <property type="term" value="P:positive regulation of exosomal secretion"/>
    <property type="evidence" value="ECO:0007669"/>
    <property type="project" value="Ensembl"/>
</dbReference>
<dbReference type="GO" id="GO:0010971">
    <property type="term" value="P:positive regulation of G2/M transition of mitotic cell cycle"/>
    <property type="evidence" value="ECO:0007669"/>
    <property type="project" value="Ensembl"/>
</dbReference>
<dbReference type="GO" id="GO:0006813">
    <property type="term" value="P:potassium ion transport"/>
    <property type="evidence" value="ECO:0000314"/>
    <property type="project" value="MGI"/>
</dbReference>
<dbReference type="GO" id="GO:0051261">
    <property type="term" value="P:protein depolymerization"/>
    <property type="evidence" value="ECO:0007669"/>
    <property type="project" value="Ensembl"/>
</dbReference>
<dbReference type="GO" id="GO:0015031">
    <property type="term" value="P:protein transport"/>
    <property type="evidence" value="ECO:0007669"/>
    <property type="project" value="UniProtKB-KW"/>
</dbReference>
<dbReference type="GO" id="GO:1901673">
    <property type="term" value="P:regulation of mitotic spindle assembly"/>
    <property type="evidence" value="ECO:0007669"/>
    <property type="project" value="Ensembl"/>
</dbReference>
<dbReference type="GO" id="GO:0033993">
    <property type="term" value="P:response to lipid"/>
    <property type="evidence" value="ECO:0007669"/>
    <property type="project" value="Ensembl"/>
</dbReference>
<dbReference type="GO" id="GO:0043162">
    <property type="term" value="P:ubiquitin-dependent protein catabolic process via the multivesicular body sorting pathway"/>
    <property type="evidence" value="ECO:0007669"/>
    <property type="project" value="Ensembl"/>
</dbReference>
<dbReference type="GO" id="GO:0090611">
    <property type="term" value="P:ubiquitin-independent protein catabolic process via the multivesicular body sorting pathway"/>
    <property type="evidence" value="ECO:0007669"/>
    <property type="project" value="Ensembl"/>
</dbReference>
<dbReference type="GO" id="GO:0007034">
    <property type="term" value="P:vacuolar transport"/>
    <property type="evidence" value="ECO:0000315"/>
    <property type="project" value="MGI"/>
</dbReference>
<dbReference type="GO" id="GO:0046761">
    <property type="term" value="P:viral budding from plasma membrane"/>
    <property type="evidence" value="ECO:0000315"/>
    <property type="project" value="UniProtKB"/>
</dbReference>
<dbReference type="GO" id="GO:0039702">
    <property type="term" value="P:viral budding via host ESCRT complex"/>
    <property type="evidence" value="ECO:0007669"/>
    <property type="project" value="Ensembl"/>
</dbReference>
<dbReference type="CDD" id="cd02678">
    <property type="entry name" value="MIT_VPS4"/>
    <property type="match status" value="1"/>
</dbReference>
<dbReference type="CDD" id="cd19521">
    <property type="entry name" value="RecA-like_VPS4"/>
    <property type="match status" value="1"/>
</dbReference>
<dbReference type="FunFam" id="3.40.50.300:FF:000043">
    <property type="entry name" value="Vacuolar protein sorting-associated protein 4"/>
    <property type="match status" value="1"/>
</dbReference>
<dbReference type="FunFam" id="1.20.58.80:FF:000002">
    <property type="entry name" value="Vacuolar protein sorting-associated protein 4A"/>
    <property type="match status" value="1"/>
</dbReference>
<dbReference type="FunFam" id="1.10.8.60:FF:000015">
    <property type="entry name" value="vacuolar protein sorting-associated protein 4A"/>
    <property type="match status" value="1"/>
</dbReference>
<dbReference type="Gene3D" id="1.10.8.60">
    <property type="match status" value="1"/>
</dbReference>
<dbReference type="Gene3D" id="3.40.50.300">
    <property type="entry name" value="P-loop containing nucleotide triphosphate hydrolases"/>
    <property type="match status" value="1"/>
</dbReference>
<dbReference type="Gene3D" id="1.20.58.80">
    <property type="entry name" value="Phosphotransferase system, lactose/cellobiose-type IIA subunit"/>
    <property type="match status" value="1"/>
</dbReference>
<dbReference type="InterPro" id="IPR003593">
    <property type="entry name" value="AAA+_ATPase"/>
</dbReference>
<dbReference type="InterPro" id="IPR041569">
    <property type="entry name" value="AAA_lid_3"/>
</dbReference>
<dbReference type="InterPro" id="IPR003959">
    <property type="entry name" value="ATPase_AAA_core"/>
</dbReference>
<dbReference type="InterPro" id="IPR003960">
    <property type="entry name" value="ATPase_AAA_CS"/>
</dbReference>
<dbReference type="InterPro" id="IPR007330">
    <property type="entry name" value="MIT_dom"/>
</dbReference>
<dbReference type="InterPro" id="IPR036181">
    <property type="entry name" value="MIT_dom_sf"/>
</dbReference>
<dbReference type="InterPro" id="IPR050304">
    <property type="entry name" value="MT-severing_AAA_ATPase"/>
</dbReference>
<dbReference type="InterPro" id="IPR027417">
    <property type="entry name" value="P-loop_NTPase"/>
</dbReference>
<dbReference type="InterPro" id="IPR015415">
    <property type="entry name" value="Spast_Vps4_C"/>
</dbReference>
<dbReference type="InterPro" id="IPR045253">
    <property type="entry name" value="VPS4_MIT"/>
</dbReference>
<dbReference type="PANTHER" id="PTHR23074">
    <property type="entry name" value="AAA DOMAIN-CONTAINING"/>
    <property type="match status" value="1"/>
</dbReference>
<dbReference type="PANTHER" id="PTHR23074:SF72">
    <property type="entry name" value="VACUOLAR PROTEIN SORTING-ASSOCIATED PROTEIN 4B"/>
    <property type="match status" value="1"/>
</dbReference>
<dbReference type="Pfam" id="PF00004">
    <property type="entry name" value="AAA"/>
    <property type="match status" value="1"/>
</dbReference>
<dbReference type="Pfam" id="PF17862">
    <property type="entry name" value="AAA_lid_3"/>
    <property type="match status" value="1"/>
</dbReference>
<dbReference type="Pfam" id="PF04212">
    <property type="entry name" value="MIT"/>
    <property type="match status" value="1"/>
</dbReference>
<dbReference type="Pfam" id="PF09336">
    <property type="entry name" value="Vps4_C"/>
    <property type="match status" value="1"/>
</dbReference>
<dbReference type="SMART" id="SM00382">
    <property type="entry name" value="AAA"/>
    <property type="match status" value="1"/>
</dbReference>
<dbReference type="SMART" id="SM00745">
    <property type="entry name" value="MIT"/>
    <property type="match status" value="1"/>
</dbReference>
<dbReference type="SUPFAM" id="SSF116846">
    <property type="entry name" value="MIT domain"/>
    <property type="match status" value="1"/>
</dbReference>
<dbReference type="SUPFAM" id="SSF52540">
    <property type="entry name" value="P-loop containing nucleoside triphosphate hydrolases"/>
    <property type="match status" value="1"/>
</dbReference>
<dbReference type="PROSITE" id="PS00674">
    <property type="entry name" value="AAA"/>
    <property type="match status" value="1"/>
</dbReference>
<name>VPS4B_MOUSE</name>